<reference key="1">
    <citation type="journal article" date="2004" name="Nature">
        <title>Genome evolution in yeasts.</title>
        <authorList>
            <person name="Dujon B."/>
            <person name="Sherman D."/>
            <person name="Fischer G."/>
            <person name="Durrens P."/>
            <person name="Casaregola S."/>
            <person name="Lafontaine I."/>
            <person name="de Montigny J."/>
            <person name="Marck C."/>
            <person name="Neuveglise C."/>
            <person name="Talla E."/>
            <person name="Goffard N."/>
            <person name="Frangeul L."/>
            <person name="Aigle M."/>
            <person name="Anthouard V."/>
            <person name="Babour A."/>
            <person name="Barbe V."/>
            <person name="Barnay S."/>
            <person name="Blanchin S."/>
            <person name="Beckerich J.-M."/>
            <person name="Beyne E."/>
            <person name="Bleykasten C."/>
            <person name="Boisrame A."/>
            <person name="Boyer J."/>
            <person name="Cattolico L."/>
            <person name="Confanioleri F."/>
            <person name="de Daruvar A."/>
            <person name="Despons L."/>
            <person name="Fabre E."/>
            <person name="Fairhead C."/>
            <person name="Ferry-Dumazet H."/>
            <person name="Groppi A."/>
            <person name="Hantraye F."/>
            <person name="Hennequin C."/>
            <person name="Jauniaux N."/>
            <person name="Joyet P."/>
            <person name="Kachouri R."/>
            <person name="Kerrest A."/>
            <person name="Koszul R."/>
            <person name="Lemaire M."/>
            <person name="Lesur I."/>
            <person name="Ma L."/>
            <person name="Muller H."/>
            <person name="Nicaud J.-M."/>
            <person name="Nikolski M."/>
            <person name="Oztas S."/>
            <person name="Ozier-Kalogeropoulos O."/>
            <person name="Pellenz S."/>
            <person name="Potier S."/>
            <person name="Richard G.-F."/>
            <person name="Straub M.-L."/>
            <person name="Suleau A."/>
            <person name="Swennen D."/>
            <person name="Tekaia F."/>
            <person name="Wesolowski-Louvel M."/>
            <person name="Westhof E."/>
            <person name="Wirth B."/>
            <person name="Zeniou-Meyer M."/>
            <person name="Zivanovic Y."/>
            <person name="Bolotin-Fukuhara M."/>
            <person name="Thierry A."/>
            <person name="Bouchier C."/>
            <person name="Caudron B."/>
            <person name="Scarpelli C."/>
            <person name="Gaillardin C."/>
            <person name="Weissenbach J."/>
            <person name="Wincker P."/>
            <person name="Souciet J.-L."/>
        </authorList>
    </citation>
    <scope>NUCLEOTIDE SEQUENCE [LARGE SCALE GENOMIC DNA]</scope>
    <source>
        <strain>ATCC 2001 / BCRC 20586 / JCM 3761 / NBRC 0622 / NRRL Y-65 / CBS 138</strain>
    </source>
</reference>
<name>DOT1_CANGA</name>
<keyword id="KW-0156">Chromatin regulator</keyword>
<keyword id="KW-0489">Methyltransferase</keyword>
<keyword id="KW-0539">Nucleus</keyword>
<keyword id="KW-1185">Reference proteome</keyword>
<keyword id="KW-0677">Repeat</keyword>
<keyword id="KW-0949">S-adenosyl-L-methionine</keyword>
<keyword id="KW-0804">Transcription</keyword>
<keyword id="KW-0805">Transcription regulation</keyword>
<keyword id="KW-0808">Transferase</keyword>
<sequence>MQEGLKLAERYNASLGSSQTYPIDNHHDKESSTDVATDDIMEKDLHSGKTISSQNSLDGSEASTPVHQLERPTIDVSERNDSRRKFRKKTSLDDLLDQASKFQPQYEYSFPTSFLRKRKAPQSNESDGEEEAKQNRTNKIVKQKKTKKNVKVTSKSKASVPIEEKHTINKQPKKTGTGGMKRGPKPGRKKKSQKNTKNSIKKESTNAINNHKMYEMDSASSRFAEHKNSTNSESANNSFIDWSLPKFSPPYQIFDIDNINSYSNFQGQIYSSASLTKHHNEIGSKTPFSRNRDGSKSPIDDGQGKLIGLRSILYPDYYEEYLMDYKKVNFRYDGMAEIGKIMEYVGRIYLPEKYQKEYKETVVDIYNTAYDNKDLALSISTVEKYNQFVGSIPKAEIVNHLAATKELPRSFLHDFLQIVYTRSIHPYASKLKQYKAFSNYVYGELLPGFLTDVYSKCGLSKNHLFMDLGSGVGNCVIQASLEFGCRESFGCEIMEAASELTEIQMREYSNRCKLFGFKQSKIDYSLRKSFINNEKVESLIPECDVLLVNNFLFDGKLNYEVTKLLQKTKVGCKIISLKNIRASGYTLDTVNIESVLNRLEVKKYRLDNNSVSWTHNGGEYFISTVLDRIDESLLDPQKRDRRNTHRPAKYTR</sequence>
<evidence type="ECO:0000250" key="1"/>
<evidence type="ECO:0000250" key="2">
    <source>
        <dbReference type="UniProtKB" id="Q04089"/>
    </source>
</evidence>
<evidence type="ECO:0000255" key="3">
    <source>
        <dbReference type="PROSITE-ProRule" id="PRU00902"/>
    </source>
</evidence>
<evidence type="ECO:0000256" key="4">
    <source>
        <dbReference type="SAM" id="MobiDB-lite"/>
    </source>
</evidence>
<protein>
    <recommendedName>
        <fullName>Histone-lysine N-methyltransferase, H3 lysine-79 specific</fullName>
        <ecNumber>2.1.1.360</ecNumber>
    </recommendedName>
    <alternativeName>
        <fullName>Histone H3-K79 methyltransferase</fullName>
        <shortName>H3-K79-HMTase</shortName>
    </alternativeName>
</protein>
<organism>
    <name type="scientific">Candida glabrata (strain ATCC 2001 / BCRC 20586 / JCM 3761 / NBRC 0622 / NRRL Y-65 / CBS 138)</name>
    <name type="common">Yeast</name>
    <name type="synonym">Nakaseomyces glabratus</name>
    <dbReference type="NCBI Taxonomy" id="284593"/>
    <lineage>
        <taxon>Eukaryota</taxon>
        <taxon>Fungi</taxon>
        <taxon>Dikarya</taxon>
        <taxon>Ascomycota</taxon>
        <taxon>Saccharomycotina</taxon>
        <taxon>Saccharomycetes</taxon>
        <taxon>Saccharomycetales</taxon>
        <taxon>Saccharomycetaceae</taxon>
        <taxon>Nakaseomyces</taxon>
    </lineage>
</organism>
<gene>
    <name type="primary">DOT1</name>
    <name type="ordered locus">CAGL0J10516g</name>
</gene>
<proteinExistence type="inferred from homology"/>
<feature type="chain" id="PRO_0000270607" description="Histone-lysine N-methyltransferase, H3 lysine-79 specific">
    <location>
        <begin position="1"/>
        <end position="652"/>
    </location>
</feature>
<feature type="domain" description="DOT1" evidence="3">
    <location>
        <begin position="321"/>
        <end position="638"/>
    </location>
</feature>
<feature type="region of interest" description="Disordered" evidence="4">
    <location>
        <begin position="15"/>
        <end position="90"/>
    </location>
</feature>
<feature type="region of interest" description="Disordered" evidence="4">
    <location>
        <begin position="112"/>
        <end position="211"/>
    </location>
</feature>
<feature type="region of interest" description="Disordered" evidence="4">
    <location>
        <begin position="281"/>
        <end position="300"/>
    </location>
</feature>
<feature type="compositionally biased region" description="Polar residues" evidence="4">
    <location>
        <begin position="49"/>
        <end position="66"/>
    </location>
</feature>
<feature type="compositionally biased region" description="Basic and acidic residues" evidence="4">
    <location>
        <begin position="68"/>
        <end position="83"/>
    </location>
</feature>
<feature type="compositionally biased region" description="Basic residues" evidence="4">
    <location>
        <begin position="139"/>
        <end position="150"/>
    </location>
</feature>
<feature type="compositionally biased region" description="Basic residues" evidence="4">
    <location>
        <begin position="182"/>
        <end position="194"/>
    </location>
</feature>
<feature type="compositionally biased region" description="Basic and acidic residues" evidence="4">
    <location>
        <begin position="290"/>
        <end position="300"/>
    </location>
</feature>
<feature type="binding site" evidence="3">
    <location>
        <begin position="442"/>
        <end position="445"/>
    </location>
    <ligand>
        <name>S-adenosyl-L-methionine</name>
        <dbReference type="ChEBI" id="CHEBI:59789"/>
    </ligand>
</feature>
<feature type="binding site" evidence="3">
    <location>
        <begin position="465"/>
        <end position="474"/>
    </location>
    <ligand>
        <name>S-adenosyl-L-methionine</name>
        <dbReference type="ChEBI" id="CHEBI:59789"/>
    </ligand>
</feature>
<feature type="binding site" evidence="3">
    <location>
        <position position="492"/>
    </location>
    <ligand>
        <name>S-adenosyl-L-methionine</name>
        <dbReference type="ChEBI" id="CHEBI:59789"/>
    </ligand>
</feature>
<feature type="binding site" evidence="3">
    <location>
        <begin position="529"/>
        <end position="530"/>
    </location>
    <ligand>
        <name>S-adenosyl-L-methionine</name>
        <dbReference type="ChEBI" id="CHEBI:59789"/>
    </ligand>
</feature>
<dbReference type="EC" id="2.1.1.360"/>
<dbReference type="EMBL" id="CR380956">
    <property type="protein sequence ID" value="CAG61120.1"/>
    <property type="molecule type" value="Genomic_DNA"/>
</dbReference>
<dbReference type="RefSeq" id="XP_448169.1">
    <property type="nucleotide sequence ID" value="XM_448169.1"/>
</dbReference>
<dbReference type="SMR" id="Q6FNM5"/>
<dbReference type="FunCoup" id="Q6FNM5">
    <property type="interactions" value="38"/>
</dbReference>
<dbReference type="STRING" id="284593.Q6FNM5"/>
<dbReference type="EnsemblFungi" id="CAGL0J10516g-T">
    <property type="protein sequence ID" value="CAGL0J10516g-T-p1"/>
    <property type="gene ID" value="CAGL0J10516g"/>
</dbReference>
<dbReference type="KEGG" id="cgr:2889607"/>
<dbReference type="CGD" id="CAL0133274">
    <property type="gene designation" value="CAGL0J10516g"/>
</dbReference>
<dbReference type="VEuPathDB" id="FungiDB:CAGL0J10516g"/>
<dbReference type="eggNOG" id="KOG3924">
    <property type="taxonomic scope" value="Eukaryota"/>
</dbReference>
<dbReference type="HOGENOM" id="CLU_027287_0_1_1"/>
<dbReference type="InParanoid" id="Q6FNM5"/>
<dbReference type="OMA" id="DFLHIIY"/>
<dbReference type="Proteomes" id="UP000002428">
    <property type="component" value="Chromosome J"/>
</dbReference>
<dbReference type="GO" id="GO:0000781">
    <property type="term" value="C:chromosome, telomeric region"/>
    <property type="evidence" value="ECO:0007669"/>
    <property type="project" value="GOC"/>
</dbReference>
<dbReference type="GO" id="GO:0000786">
    <property type="term" value="C:nucleosome"/>
    <property type="evidence" value="ECO:0007669"/>
    <property type="project" value="InterPro"/>
</dbReference>
<dbReference type="GO" id="GO:0005634">
    <property type="term" value="C:nucleus"/>
    <property type="evidence" value="ECO:0007669"/>
    <property type="project" value="UniProtKB-SubCell"/>
</dbReference>
<dbReference type="GO" id="GO:0042393">
    <property type="term" value="F:histone binding"/>
    <property type="evidence" value="ECO:0007669"/>
    <property type="project" value="InterPro"/>
</dbReference>
<dbReference type="GO" id="GO:0140956">
    <property type="term" value="F:histone H3K79 trimethyltransferase activity"/>
    <property type="evidence" value="ECO:0007669"/>
    <property type="project" value="UniProtKB-EC"/>
</dbReference>
<dbReference type="GO" id="GO:0070911">
    <property type="term" value="P:global genome nucleotide-excision repair"/>
    <property type="evidence" value="ECO:0007669"/>
    <property type="project" value="EnsemblFungi"/>
</dbReference>
<dbReference type="GO" id="GO:0051598">
    <property type="term" value="P:meiotic recombination checkpoint signaling"/>
    <property type="evidence" value="ECO:0007669"/>
    <property type="project" value="EnsemblFungi"/>
</dbReference>
<dbReference type="GO" id="GO:0032259">
    <property type="term" value="P:methylation"/>
    <property type="evidence" value="ECO:0007669"/>
    <property type="project" value="UniProtKB-KW"/>
</dbReference>
<dbReference type="GO" id="GO:0031571">
    <property type="term" value="P:mitotic G1 DNA damage checkpoint signaling"/>
    <property type="evidence" value="ECO:0007669"/>
    <property type="project" value="EnsemblFungi"/>
</dbReference>
<dbReference type="GO" id="GO:0031573">
    <property type="term" value="P:mitotic intra-S DNA damage checkpoint signaling"/>
    <property type="evidence" value="ECO:0007669"/>
    <property type="project" value="EnsemblFungi"/>
</dbReference>
<dbReference type="GO" id="GO:0031452">
    <property type="term" value="P:negative regulation of heterochromatin formation"/>
    <property type="evidence" value="ECO:0007669"/>
    <property type="project" value="EnsemblFungi"/>
</dbReference>
<dbReference type="GO" id="GO:0006334">
    <property type="term" value="P:nucleosome assembly"/>
    <property type="evidence" value="ECO:0007669"/>
    <property type="project" value="EnsemblFungi"/>
</dbReference>
<dbReference type="GO" id="GO:0006301">
    <property type="term" value="P:postreplication repair"/>
    <property type="evidence" value="ECO:0007669"/>
    <property type="project" value="EnsemblFungi"/>
</dbReference>
<dbReference type="GO" id="GO:0000725">
    <property type="term" value="P:recombinational repair"/>
    <property type="evidence" value="ECO:0007669"/>
    <property type="project" value="EnsemblFungi"/>
</dbReference>
<dbReference type="GO" id="GO:0031509">
    <property type="term" value="P:subtelomeric heterochromatin formation"/>
    <property type="evidence" value="ECO:0007669"/>
    <property type="project" value="EnsemblFungi"/>
</dbReference>
<dbReference type="FunFam" id="3.40.50.150:FF:000033">
    <property type="entry name" value="Histone-lysine N-methyltransferase, H3 lysine-79 specific"/>
    <property type="match status" value="1"/>
</dbReference>
<dbReference type="Gene3D" id="1.10.260.170">
    <property type="match status" value="1"/>
</dbReference>
<dbReference type="Gene3D" id="3.40.50.150">
    <property type="entry name" value="Vaccinia Virus protein VP39"/>
    <property type="match status" value="1"/>
</dbReference>
<dbReference type="InterPro" id="IPR021162">
    <property type="entry name" value="Dot1"/>
</dbReference>
<dbReference type="InterPro" id="IPR025789">
    <property type="entry name" value="DOT1_dom"/>
</dbReference>
<dbReference type="InterPro" id="IPR030445">
    <property type="entry name" value="H3-K79_meTrfase"/>
</dbReference>
<dbReference type="InterPro" id="IPR029063">
    <property type="entry name" value="SAM-dependent_MTases_sf"/>
</dbReference>
<dbReference type="PANTHER" id="PTHR21451">
    <property type="entry name" value="HISTONE H3 METHYLTRANSFERASE"/>
    <property type="match status" value="1"/>
</dbReference>
<dbReference type="PANTHER" id="PTHR21451:SF0">
    <property type="entry name" value="HISTONE-LYSINE N-METHYLTRANSFERASE, H3 LYSINE-79 SPECIFIC"/>
    <property type="match status" value="1"/>
</dbReference>
<dbReference type="Pfam" id="PF08123">
    <property type="entry name" value="DOT1"/>
    <property type="match status" value="1"/>
</dbReference>
<dbReference type="PIRSF" id="PIRSF017570">
    <property type="entry name" value="Histone_H3-K79_MeTrfase"/>
    <property type="match status" value="1"/>
</dbReference>
<dbReference type="SUPFAM" id="SSF53335">
    <property type="entry name" value="S-adenosyl-L-methionine-dependent methyltransferases"/>
    <property type="match status" value="1"/>
</dbReference>
<dbReference type="PROSITE" id="PS51569">
    <property type="entry name" value="DOT1"/>
    <property type="match status" value="1"/>
</dbReference>
<accession>Q6FNM5</accession>
<comment type="function">
    <text evidence="2">Histone methyltransferase that specifically trimethylates histone H3 to form H3K79me3. This methylation is required for telomere silencing and for the pachytene checkpoint during the meiotic cell cycle by allowing the recruitment of RAD9 to double strand breaks. Nucleosomes are preferred as substrate compared to free histone.</text>
</comment>
<comment type="catalytic activity">
    <reaction evidence="2 3">
        <text>L-lysyl(79)-[histone H3] + 3 S-adenosyl-L-methionine = N(6),N(6),N(6)-trimethyl-L-lysyl(79)-[histone H3] + 3 S-adenosyl-L-homocysteine + 3 H(+)</text>
        <dbReference type="Rhea" id="RHEA:60328"/>
        <dbReference type="Rhea" id="RHEA-COMP:15549"/>
        <dbReference type="Rhea" id="RHEA-COMP:15552"/>
        <dbReference type="ChEBI" id="CHEBI:15378"/>
        <dbReference type="ChEBI" id="CHEBI:29969"/>
        <dbReference type="ChEBI" id="CHEBI:57856"/>
        <dbReference type="ChEBI" id="CHEBI:59789"/>
        <dbReference type="ChEBI" id="CHEBI:61961"/>
        <dbReference type="EC" id="2.1.1.360"/>
    </reaction>
</comment>
<comment type="activity regulation">
    <text evidence="1">Ubiquitination of histone H2B to form H2BK123ub1 is required for efficient DOT1 methyltransferase activity on histone H3.</text>
</comment>
<comment type="subcellular location">
    <subcellularLocation>
        <location evidence="1">Nucleus</location>
    </subcellularLocation>
</comment>
<comment type="miscellaneous">
    <text>In contrast to other lysine histone methyltransferases, it does not contain a SET domain, suggesting the existence of another mechanism for methylation of lysine residues of histones.</text>
</comment>
<comment type="similarity">
    <text evidence="3">Belongs to the class I-like SAM-binding methyltransferase superfamily. DOT1 family.</text>
</comment>